<name>SPED_SERP5</name>
<sequence length="264" mass="30203">MHKLKLHGFNNLTKSLSFCIYDICYAKTADDRAGYIAYIDEQYNANRLTEILSETCSIIGANILNIARQDYEPQGASVTILVSEEPVDPNDVDTSEHPGPLSKTVVAHLDKSHICVHTYPESHPEGGLCTFRADIEVSTCGVISPLKALNYLIHQLESDIVTMDYRVRGFTRDVNGVKHYIDHEINSIQNFMSDDMKALYHMMDVNVYQENIFHTKMLLKDFDLKHYLFNAKPDALSAAERKEITDLLWKEMQEIYYGRNIPHL</sequence>
<reference key="1">
    <citation type="submission" date="2007-09" db="EMBL/GenBank/DDBJ databases">
        <title>Complete sequence of chromosome of Serratia proteamaculans 568.</title>
        <authorList>
            <consortium name="US DOE Joint Genome Institute"/>
            <person name="Copeland A."/>
            <person name="Lucas S."/>
            <person name="Lapidus A."/>
            <person name="Barry K."/>
            <person name="Glavina del Rio T."/>
            <person name="Dalin E."/>
            <person name="Tice H."/>
            <person name="Pitluck S."/>
            <person name="Chain P."/>
            <person name="Malfatti S."/>
            <person name="Shin M."/>
            <person name="Vergez L."/>
            <person name="Schmutz J."/>
            <person name="Larimer F."/>
            <person name="Land M."/>
            <person name="Hauser L."/>
            <person name="Kyrpides N."/>
            <person name="Kim E."/>
            <person name="Taghavi S."/>
            <person name="Newman L."/>
            <person name="Vangronsveld J."/>
            <person name="van der Lelie D."/>
            <person name="Richardson P."/>
        </authorList>
    </citation>
    <scope>NUCLEOTIDE SEQUENCE [LARGE SCALE GENOMIC DNA]</scope>
    <source>
        <strain>568</strain>
    </source>
</reference>
<proteinExistence type="inferred from homology"/>
<comment type="function">
    <text evidence="1">Catalyzes the decarboxylation of S-adenosylmethionine to S-adenosylmethioninamine (dcAdoMet), the propylamine donor required for the synthesis of the polyamines spermine and spermidine from the diamine putrescine.</text>
</comment>
<comment type="catalytic activity">
    <reaction evidence="1">
        <text>S-adenosyl-L-methionine + H(+) = S-adenosyl 3-(methylsulfanyl)propylamine + CO2</text>
        <dbReference type="Rhea" id="RHEA:15981"/>
        <dbReference type="ChEBI" id="CHEBI:15378"/>
        <dbReference type="ChEBI" id="CHEBI:16526"/>
        <dbReference type="ChEBI" id="CHEBI:57443"/>
        <dbReference type="ChEBI" id="CHEBI:59789"/>
        <dbReference type="EC" id="4.1.1.50"/>
    </reaction>
</comment>
<comment type="cofactor">
    <cofactor evidence="1">
        <name>pyruvate</name>
        <dbReference type="ChEBI" id="CHEBI:15361"/>
    </cofactor>
    <text evidence="1">Binds 1 pyruvoyl group covalently per subunit.</text>
</comment>
<comment type="pathway">
    <text evidence="1">Amine and polyamine biosynthesis; S-adenosylmethioninamine biosynthesis; S-adenosylmethioninamine from S-adenosyl-L-methionine: step 1/1.</text>
</comment>
<comment type="subunit">
    <text evidence="1">Heterooctamer of four alpha and four beta chains arranged as a tetramer of alpha/beta heterodimers.</text>
</comment>
<comment type="PTM">
    <text evidence="1">Is synthesized initially as an inactive proenzyme. Formation of the active enzyme involves a self-maturation process in which the active site pyruvoyl group is generated from an internal serine residue via an autocatalytic post-translational modification. Two non-identical subunits are generated from the proenzyme in this reaction, and the pyruvate is formed at the N-terminus of the alpha chain, which is derived from the carboxyl end of the proenzyme. The post-translation cleavage follows an unusual pathway, termed non-hydrolytic serinolysis, in which the side chain hydroxyl group of the serine supplies its oxygen atom to form the C-terminus of the beta chain, while the remainder of the serine residue undergoes an oxidative deamination to produce ammonia and the pyruvoyl group blocking the N-terminus of the alpha chain.</text>
</comment>
<comment type="similarity">
    <text evidence="1">Belongs to the prokaryotic AdoMetDC family. Type 2 subfamily.</text>
</comment>
<dbReference type="EC" id="4.1.1.50" evidence="1"/>
<dbReference type="EMBL" id="CP000826">
    <property type="protein sequence ID" value="ABV43097.1"/>
    <property type="molecule type" value="Genomic_DNA"/>
</dbReference>
<dbReference type="STRING" id="399741.Spro_4002"/>
<dbReference type="KEGG" id="spe:Spro_4002"/>
<dbReference type="eggNOG" id="COG1586">
    <property type="taxonomic scope" value="Bacteria"/>
</dbReference>
<dbReference type="HOGENOM" id="CLU_092007_0_0_6"/>
<dbReference type="OrthoDB" id="5290709at2"/>
<dbReference type="UniPathway" id="UPA00331">
    <property type="reaction ID" value="UER00451"/>
</dbReference>
<dbReference type="GO" id="GO:0005829">
    <property type="term" value="C:cytosol"/>
    <property type="evidence" value="ECO:0007669"/>
    <property type="project" value="TreeGrafter"/>
</dbReference>
<dbReference type="GO" id="GO:0004014">
    <property type="term" value="F:adenosylmethionine decarboxylase activity"/>
    <property type="evidence" value="ECO:0007669"/>
    <property type="project" value="UniProtKB-UniRule"/>
</dbReference>
<dbReference type="GO" id="GO:0008295">
    <property type="term" value="P:spermidine biosynthetic process"/>
    <property type="evidence" value="ECO:0007669"/>
    <property type="project" value="UniProtKB-UniRule"/>
</dbReference>
<dbReference type="FunFam" id="3.60.90.10:FF:000001">
    <property type="entry name" value="S-adenosylmethionine decarboxylase proenzyme"/>
    <property type="match status" value="1"/>
</dbReference>
<dbReference type="Gene3D" id="3.60.90.10">
    <property type="entry name" value="S-adenosylmethionine decarboxylase"/>
    <property type="match status" value="1"/>
</dbReference>
<dbReference type="HAMAP" id="MF_00465">
    <property type="entry name" value="AdoMetDC_2"/>
    <property type="match status" value="1"/>
</dbReference>
<dbReference type="InterPro" id="IPR003826">
    <property type="entry name" value="AdoMetDC_fam_prok"/>
</dbReference>
<dbReference type="InterPro" id="IPR009165">
    <property type="entry name" value="S-AdoMet_deCO2ase_bac"/>
</dbReference>
<dbReference type="InterPro" id="IPR016067">
    <property type="entry name" value="S-AdoMet_deCO2ase_core"/>
</dbReference>
<dbReference type="NCBIfam" id="TIGR03331">
    <property type="entry name" value="SAM_DCase_Eco"/>
    <property type="match status" value="1"/>
</dbReference>
<dbReference type="PANTHER" id="PTHR33866">
    <property type="entry name" value="S-ADENOSYLMETHIONINE DECARBOXYLASE PROENZYME"/>
    <property type="match status" value="1"/>
</dbReference>
<dbReference type="PANTHER" id="PTHR33866:SF1">
    <property type="entry name" value="S-ADENOSYLMETHIONINE DECARBOXYLASE PROENZYME"/>
    <property type="match status" value="1"/>
</dbReference>
<dbReference type="Pfam" id="PF02675">
    <property type="entry name" value="AdoMet_dc"/>
    <property type="match status" value="1"/>
</dbReference>
<dbReference type="PIRSF" id="PIRSF001356">
    <property type="entry name" value="SAM_decarboxylas"/>
    <property type="match status" value="1"/>
</dbReference>
<dbReference type="SUPFAM" id="SSF56276">
    <property type="entry name" value="S-adenosylmethionine decarboxylase"/>
    <property type="match status" value="1"/>
</dbReference>
<protein>
    <recommendedName>
        <fullName evidence="1">S-adenosylmethionine decarboxylase proenzyme</fullName>
        <shortName evidence="1">AdoMetDC</shortName>
        <shortName evidence="1">SAMDC</shortName>
        <ecNumber evidence="1">4.1.1.50</ecNumber>
    </recommendedName>
    <component>
        <recommendedName>
            <fullName evidence="1">S-adenosylmethionine decarboxylase beta chain</fullName>
        </recommendedName>
    </component>
    <component>
        <recommendedName>
            <fullName evidence="1">S-adenosylmethionine decarboxylase alpha chain</fullName>
        </recommendedName>
    </component>
</protein>
<gene>
    <name evidence="1" type="primary">speD</name>
    <name type="ordered locus">Spro_4002</name>
</gene>
<keyword id="KW-0068">Autocatalytic cleavage</keyword>
<keyword id="KW-0210">Decarboxylase</keyword>
<keyword id="KW-0456">Lyase</keyword>
<keyword id="KW-0620">Polyamine biosynthesis</keyword>
<keyword id="KW-0670">Pyruvate</keyword>
<keyword id="KW-0949">S-adenosyl-L-methionine</keyword>
<keyword id="KW-0704">Schiff base</keyword>
<keyword id="KW-0745">Spermidine biosynthesis</keyword>
<keyword id="KW-0865">Zymogen</keyword>
<accession>A8GJ07</accession>
<evidence type="ECO:0000255" key="1">
    <source>
        <dbReference type="HAMAP-Rule" id="MF_00465"/>
    </source>
</evidence>
<organism>
    <name type="scientific">Serratia proteamaculans (strain 568)</name>
    <dbReference type="NCBI Taxonomy" id="399741"/>
    <lineage>
        <taxon>Bacteria</taxon>
        <taxon>Pseudomonadati</taxon>
        <taxon>Pseudomonadota</taxon>
        <taxon>Gammaproteobacteria</taxon>
        <taxon>Enterobacterales</taxon>
        <taxon>Yersiniaceae</taxon>
        <taxon>Serratia</taxon>
    </lineage>
</organism>
<feature type="chain" id="PRO_1000060357" description="S-adenosylmethionine decarboxylase beta chain" evidence="1">
    <location>
        <begin position="1"/>
        <end position="111"/>
    </location>
</feature>
<feature type="chain" id="PRO_1000060358" description="S-adenosylmethionine decarboxylase alpha chain" evidence="1">
    <location>
        <begin position="112"/>
        <end position="264"/>
    </location>
</feature>
<feature type="active site" description="Schiff-base intermediate with substrate; via pyruvic acid" evidence="1">
    <location>
        <position position="112"/>
    </location>
</feature>
<feature type="active site" description="Proton acceptor; for processing activity" evidence="1">
    <location>
        <position position="117"/>
    </location>
</feature>
<feature type="active site" description="Proton donor; for catalytic activity" evidence="1">
    <location>
        <position position="140"/>
    </location>
</feature>
<feature type="site" description="Cleavage (non-hydrolytic); by autolysis" evidence="1">
    <location>
        <begin position="111"/>
        <end position="112"/>
    </location>
</feature>
<feature type="modified residue" description="Pyruvic acid (Ser); by autocatalysis" evidence="1">
    <location>
        <position position="112"/>
    </location>
</feature>